<comment type="function">
    <text evidence="1">Catalyzes the reversible phosphorylation of UMP to UDP.</text>
</comment>
<comment type="catalytic activity">
    <reaction evidence="1">
        <text>UMP + ATP = UDP + ADP</text>
        <dbReference type="Rhea" id="RHEA:24400"/>
        <dbReference type="ChEBI" id="CHEBI:30616"/>
        <dbReference type="ChEBI" id="CHEBI:57865"/>
        <dbReference type="ChEBI" id="CHEBI:58223"/>
        <dbReference type="ChEBI" id="CHEBI:456216"/>
        <dbReference type="EC" id="2.7.4.22"/>
    </reaction>
</comment>
<comment type="activity regulation">
    <text evidence="1">Allosterically activated by GTP. Inhibited by UTP.</text>
</comment>
<comment type="pathway">
    <text evidence="1">Pyrimidine metabolism; CTP biosynthesis via de novo pathway; UDP from UMP (UMPK route): step 1/1.</text>
</comment>
<comment type="subunit">
    <text evidence="1">Homohexamer.</text>
</comment>
<comment type="subcellular location">
    <subcellularLocation>
        <location evidence="1">Cytoplasm</location>
    </subcellularLocation>
</comment>
<comment type="similarity">
    <text evidence="1">Belongs to the UMP kinase family.</text>
</comment>
<dbReference type="EC" id="2.7.4.22" evidence="1"/>
<dbReference type="EMBL" id="AL591978">
    <property type="protein sequence ID" value="CAC99391.1"/>
    <property type="molecule type" value="Genomic_DNA"/>
</dbReference>
<dbReference type="PIR" id="AI1238">
    <property type="entry name" value="AI1238"/>
</dbReference>
<dbReference type="RefSeq" id="NP_464838.1">
    <property type="nucleotide sequence ID" value="NC_003210.1"/>
</dbReference>
<dbReference type="RefSeq" id="WP_003723449.1">
    <property type="nucleotide sequence ID" value="NZ_CP149495.1"/>
</dbReference>
<dbReference type="SMR" id="P65927"/>
<dbReference type="STRING" id="169963.gene:17593970"/>
<dbReference type="PaxDb" id="169963-lmo1313"/>
<dbReference type="EnsemblBacteria" id="CAC99391">
    <property type="protein sequence ID" value="CAC99391"/>
    <property type="gene ID" value="CAC99391"/>
</dbReference>
<dbReference type="GeneID" id="93239189"/>
<dbReference type="GeneID" id="987690"/>
<dbReference type="KEGG" id="lmo:lmo1313"/>
<dbReference type="PATRIC" id="fig|169963.11.peg.1350"/>
<dbReference type="eggNOG" id="COG0528">
    <property type="taxonomic scope" value="Bacteria"/>
</dbReference>
<dbReference type="HOGENOM" id="CLU_033861_0_0_9"/>
<dbReference type="OrthoDB" id="9807458at2"/>
<dbReference type="PhylomeDB" id="P65927"/>
<dbReference type="BioCyc" id="LMON169963:LMO1313-MONOMER"/>
<dbReference type="UniPathway" id="UPA00159">
    <property type="reaction ID" value="UER00275"/>
</dbReference>
<dbReference type="Proteomes" id="UP000000817">
    <property type="component" value="Chromosome"/>
</dbReference>
<dbReference type="GO" id="GO:0005737">
    <property type="term" value="C:cytoplasm"/>
    <property type="evidence" value="ECO:0007669"/>
    <property type="project" value="UniProtKB-SubCell"/>
</dbReference>
<dbReference type="GO" id="GO:0005524">
    <property type="term" value="F:ATP binding"/>
    <property type="evidence" value="ECO:0007669"/>
    <property type="project" value="UniProtKB-KW"/>
</dbReference>
<dbReference type="GO" id="GO:0033862">
    <property type="term" value="F:UMP kinase activity"/>
    <property type="evidence" value="ECO:0000318"/>
    <property type="project" value="GO_Central"/>
</dbReference>
<dbReference type="GO" id="GO:0044210">
    <property type="term" value="P:'de novo' CTP biosynthetic process"/>
    <property type="evidence" value="ECO:0007669"/>
    <property type="project" value="UniProtKB-UniRule"/>
</dbReference>
<dbReference type="GO" id="GO:0006225">
    <property type="term" value="P:UDP biosynthetic process"/>
    <property type="evidence" value="ECO:0000318"/>
    <property type="project" value="GO_Central"/>
</dbReference>
<dbReference type="CDD" id="cd04254">
    <property type="entry name" value="AAK_UMPK-PyrH-Ec"/>
    <property type="match status" value="1"/>
</dbReference>
<dbReference type="FunFam" id="3.40.1160.10:FF:000001">
    <property type="entry name" value="Uridylate kinase"/>
    <property type="match status" value="1"/>
</dbReference>
<dbReference type="Gene3D" id="3.40.1160.10">
    <property type="entry name" value="Acetylglutamate kinase-like"/>
    <property type="match status" value="1"/>
</dbReference>
<dbReference type="HAMAP" id="MF_01220_B">
    <property type="entry name" value="PyrH_B"/>
    <property type="match status" value="1"/>
</dbReference>
<dbReference type="InterPro" id="IPR036393">
    <property type="entry name" value="AceGlu_kinase-like_sf"/>
</dbReference>
<dbReference type="InterPro" id="IPR001048">
    <property type="entry name" value="Asp/Glu/Uridylate_kinase"/>
</dbReference>
<dbReference type="InterPro" id="IPR011817">
    <property type="entry name" value="Uridylate_kinase"/>
</dbReference>
<dbReference type="InterPro" id="IPR015963">
    <property type="entry name" value="Uridylate_kinase_bac"/>
</dbReference>
<dbReference type="NCBIfam" id="TIGR02075">
    <property type="entry name" value="pyrH_bact"/>
    <property type="match status" value="1"/>
</dbReference>
<dbReference type="PANTHER" id="PTHR42833">
    <property type="entry name" value="URIDYLATE KINASE"/>
    <property type="match status" value="1"/>
</dbReference>
<dbReference type="PANTHER" id="PTHR42833:SF4">
    <property type="entry name" value="URIDYLATE KINASE PUMPKIN, CHLOROPLASTIC"/>
    <property type="match status" value="1"/>
</dbReference>
<dbReference type="Pfam" id="PF00696">
    <property type="entry name" value="AA_kinase"/>
    <property type="match status" value="1"/>
</dbReference>
<dbReference type="PIRSF" id="PIRSF005650">
    <property type="entry name" value="Uridylate_kin"/>
    <property type="match status" value="1"/>
</dbReference>
<dbReference type="SUPFAM" id="SSF53633">
    <property type="entry name" value="Carbamate kinase-like"/>
    <property type="match status" value="1"/>
</dbReference>
<name>PYRH_LISMO</name>
<keyword id="KW-0021">Allosteric enzyme</keyword>
<keyword id="KW-0067">ATP-binding</keyword>
<keyword id="KW-0963">Cytoplasm</keyword>
<keyword id="KW-0418">Kinase</keyword>
<keyword id="KW-0547">Nucleotide-binding</keyword>
<keyword id="KW-0665">Pyrimidine biosynthesis</keyword>
<keyword id="KW-1185">Reference proteome</keyword>
<keyword id="KW-0808">Transferase</keyword>
<sequence>MDTPDYKRVVLKLSGEALAGNDGFGINPSVVNLISAQIKEVVELGVEVAIVVGGGNIWRGKLGSEMGMDRAAADQMGMLATIMNSLSLQDSLENIGVATRVQTSIDMRQIAEPYIRRKAIRHLEKGRVVIFAGGTGNPYFSTDTAAALRAAEIEADVILMAKNNVDGVYNADPKLDENAKKYEELSYLDVIKEGLEVMDTTASSLSMDNDIPLIVFSFTEQGNNIKRVILGEKIGTTVRGKK</sequence>
<accession>P65927</accession>
<accession>Q92C41</accession>
<proteinExistence type="inferred from homology"/>
<gene>
    <name evidence="1" type="primary">pyrH</name>
    <name type="synonym">smbA</name>
    <name type="ordered locus">lmo1313</name>
</gene>
<feature type="chain" id="PRO_0000143858" description="Uridylate kinase">
    <location>
        <begin position="1"/>
        <end position="242"/>
    </location>
</feature>
<feature type="region of interest" description="Involved in allosteric activation by GTP" evidence="1">
    <location>
        <begin position="20"/>
        <end position="25"/>
    </location>
</feature>
<feature type="binding site" evidence="1">
    <location>
        <begin position="12"/>
        <end position="15"/>
    </location>
    <ligand>
        <name>ATP</name>
        <dbReference type="ChEBI" id="CHEBI:30616"/>
    </ligand>
</feature>
<feature type="binding site" evidence="1">
    <location>
        <position position="54"/>
    </location>
    <ligand>
        <name>UMP</name>
        <dbReference type="ChEBI" id="CHEBI:57865"/>
    </ligand>
</feature>
<feature type="binding site" evidence="1">
    <location>
        <position position="55"/>
    </location>
    <ligand>
        <name>ATP</name>
        <dbReference type="ChEBI" id="CHEBI:30616"/>
    </ligand>
</feature>
<feature type="binding site" evidence="1">
    <location>
        <position position="59"/>
    </location>
    <ligand>
        <name>ATP</name>
        <dbReference type="ChEBI" id="CHEBI:30616"/>
    </ligand>
</feature>
<feature type="binding site" evidence="1">
    <location>
        <position position="74"/>
    </location>
    <ligand>
        <name>UMP</name>
        <dbReference type="ChEBI" id="CHEBI:57865"/>
    </ligand>
</feature>
<feature type="binding site" evidence="1">
    <location>
        <begin position="135"/>
        <end position="142"/>
    </location>
    <ligand>
        <name>UMP</name>
        <dbReference type="ChEBI" id="CHEBI:57865"/>
    </ligand>
</feature>
<feature type="binding site" evidence="1">
    <location>
        <position position="163"/>
    </location>
    <ligand>
        <name>ATP</name>
        <dbReference type="ChEBI" id="CHEBI:30616"/>
    </ligand>
</feature>
<feature type="binding site" evidence="1">
    <location>
        <position position="169"/>
    </location>
    <ligand>
        <name>ATP</name>
        <dbReference type="ChEBI" id="CHEBI:30616"/>
    </ligand>
</feature>
<feature type="binding site" evidence="1">
    <location>
        <position position="172"/>
    </location>
    <ligand>
        <name>ATP</name>
        <dbReference type="ChEBI" id="CHEBI:30616"/>
    </ligand>
</feature>
<evidence type="ECO:0000255" key="1">
    <source>
        <dbReference type="HAMAP-Rule" id="MF_01220"/>
    </source>
</evidence>
<organism>
    <name type="scientific">Listeria monocytogenes serovar 1/2a (strain ATCC BAA-679 / EGD-e)</name>
    <dbReference type="NCBI Taxonomy" id="169963"/>
    <lineage>
        <taxon>Bacteria</taxon>
        <taxon>Bacillati</taxon>
        <taxon>Bacillota</taxon>
        <taxon>Bacilli</taxon>
        <taxon>Bacillales</taxon>
        <taxon>Listeriaceae</taxon>
        <taxon>Listeria</taxon>
    </lineage>
</organism>
<protein>
    <recommendedName>
        <fullName evidence="1">Uridylate kinase</fullName>
        <shortName evidence="1">UK</shortName>
        <ecNumber evidence="1">2.7.4.22</ecNumber>
    </recommendedName>
    <alternativeName>
        <fullName evidence="1">Uridine monophosphate kinase</fullName>
        <shortName evidence="1">UMP kinase</shortName>
        <shortName evidence="1">UMPK</shortName>
    </alternativeName>
</protein>
<reference key="1">
    <citation type="journal article" date="2001" name="Science">
        <title>Comparative genomics of Listeria species.</title>
        <authorList>
            <person name="Glaser P."/>
            <person name="Frangeul L."/>
            <person name="Buchrieser C."/>
            <person name="Rusniok C."/>
            <person name="Amend A."/>
            <person name="Baquero F."/>
            <person name="Berche P."/>
            <person name="Bloecker H."/>
            <person name="Brandt P."/>
            <person name="Chakraborty T."/>
            <person name="Charbit A."/>
            <person name="Chetouani F."/>
            <person name="Couve E."/>
            <person name="de Daruvar A."/>
            <person name="Dehoux P."/>
            <person name="Domann E."/>
            <person name="Dominguez-Bernal G."/>
            <person name="Duchaud E."/>
            <person name="Durant L."/>
            <person name="Dussurget O."/>
            <person name="Entian K.-D."/>
            <person name="Fsihi H."/>
            <person name="Garcia-del Portillo F."/>
            <person name="Garrido P."/>
            <person name="Gautier L."/>
            <person name="Goebel W."/>
            <person name="Gomez-Lopez N."/>
            <person name="Hain T."/>
            <person name="Hauf J."/>
            <person name="Jackson D."/>
            <person name="Jones L.-M."/>
            <person name="Kaerst U."/>
            <person name="Kreft J."/>
            <person name="Kuhn M."/>
            <person name="Kunst F."/>
            <person name="Kurapkat G."/>
            <person name="Madueno E."/>
            <person name="Maitournam A."/>
            <person name="Mata Vicente J."/>
            <person name="Ng E."/>
            <person name="Nedjari H."/>
            <person name="Nordsiek G."/>
            <person name="Novella S."/>
            <person name="de Pablos B."/>
            <person name="Perez-Diaz J.-C."/>
            <person name="Purcell R."/>
            <person name="Remmel B."/>
            <person name="Rose M."/>
            <person name="Schlueter T."/>
            <person name="Simoes N."/>
            <person name="Tierrez A."/>
            <person name="Vazquez-Boland J.-A."/>
            <person name="Voss H."/>
            <person name="Wehland J."/>
            <person name="Cossart P."/>
        </authorList>
    </citation>
    <scope>NUCLEOTIDE SEQUENCE [LARGE SCALE GENOMIC DNA]</scope>
    <source>
        <strain>ATCC BAA-679 / EGD-e</strain>
    </source>
</reference>